<dbReference type="EMBL" id="AE016819">
    <property type="protein sequence ID" value="AAS53477.2"/>
    <property type="molecule type" value="Genomic_DNA"/>
</dbReference>
<dbReference type="RefSeq" id="NP_985653.2">
    <property type="nucleotide sequence ID" value="NM_211007.2"/>
</dbReference>
<dbReference type="SMR" id="Q754G4"/>
<dbReference type="FunCoup" id="Q754G4">
    <property type="interactions" value="213"/>
</dbReference>
<dbReference type="STRING" id="284811.Q754G4"/>
<dbReference type="EnsemblFungi" id="AAS53477">
    <property type="protein sequence ID" value="AAS53477"/>
    <property type="gene ID" value="AGOS_AFR106C"/>
</dbReference>
<dbReference type="GeneID" id="4621896"/>
<dbReference type="KEGG" id="ago:AGOS_AFR106C"/>
<dbReference type="eggNOG" id="KOG1854">
    <property type="taxonomic scope" value="Eukaryota"/>
</dbReference>
<dbReference type="HOGENOM" id="CLU_008024_2_0_1"/>
<dbReference type="InParanoid" id="Q754G4"/>
<dbReference type="OMA" id="DYATDAY"/>
<dbReference type="OrthoDB" id="10261039at2759"/>
<dbReference type="Proteomes" id="UP000000591">
    <property type="component" value="Chromosome VI"/>
</dbReference>
<dbReference type="GO" id="GO:0061617">
    <property type="term" value="C:MICOS complex"/>
    <property type="evidence" value="ECO:0000318"/>
    <property type="project" value="GO_Central"/>
</dbReference>
<dbReference type="GO" id="GO:0030061">
    <property type="term" value="C:mitochondrial crista"/>
    <property type="evidence" value="ECO:0007669"/>
    <property type="project" value="EnsemblFungi"/>
</dbReference>
<dbReference type="GO" id="GO:0044284">
    <property type="term" value="C:mitochondrial crista junction"/>
    <property type="evidence" value="ECO:0007669"/>
    <property type="project" value="EnsemblFungi"/>
</dbReference>
<dbReference type="GO" id="GO:0042407">
    <property type="term" value="P:cristae formation"/>
    <property type="evidence" value="ECO:0000318"/>
    <property type="project" value="GO_Central"/>
</dbReference>
<dbReference type="GO" id="GO:0045041">
    <property type="term" value="P:protein import into mitochondrial intermembrane space"/>
    <property type="evidence" value="ECO:0007669"/>
    <property type="project" value="EnsemblFungi"/>
</dbReference>
<dbReference type="InterPro" id="IPR019133">
    <property type="entry name" value="MIC60"/>
</dbReference>
<dbReference type="PANTHER" id="PTHR15415:SF7">
    <property type="entry name" value="MICOS COMPLEX SUBUNIT MIC60"/>
    <property type="match status" value="1"/>
</dbReference>
<dbReference type="PANTHER" id="PTHR15415">
    <property type="entry name" value="MITOFILIN"/>
    <property type="match status" value="1"/>
</dbReference>
<dbReference type="Pfam" id="PF09731">
    <property type="entry name" value="Mitofilin"/>
    <property type="match status" value="1"/>
</dbReference>
<sequence>MLSSRAAAFTGRRLASTLPPVPRKKSHGVRRLLAKAVVATSLFYAGGLTLSAYNDKANELFVEHVPFGEELVERWEDWTSLRRPGRRMIDARRVDEISRDFRAAATPEATPVVVRPLVQLQLPELQMQGSSPVLEALVNNVNDVVVALNARALELPEDTASALSSVYGEIVHSIQALNASLDQEFATEVESRTGKAISSVQEQLEVEYKQRELALAEQYIQNFEVFKSQLQKATAEQLETELKAHEQALLARHRNEVAQLSIRQVEEFNKIIEKKLDQERNGRLAKLSELNSAVESLAPVLDRLELRAVKNECVTQLSTLISDIQGKLSRGGDEPLDLSSDLQRLTLLADILPRPKRCCSEGPALLDVAMAELQAKAQAPVASNEQLYNRWQLLQPELKTTSLLPPNAGFLGHLTAKLFSMLLFTKEGFSTTQDMDAVTARIAENLRLNKLDCALEEAVNMKGWSRKSADAWVDLARRRLEVLTLLDVIEAEVKTL</sequence>
<gene>
    <name type="primary">MIC60</name>
    <name type="ordered locus">AFR106C</name>
</gene>
<name>MIC60_EREGS</name>
<reference key="1">
    <citation type="journal article" date="2004" name="Science">
        <title>The Ashbya gossypii genome as a tool for mapping the ancient Saccharomyces cerevisiae genome.</title>
        <authorList>
            <person name="Dietrich F.S."/>
            <person name="Voegeli S."/>
            <person name="Brachat S."/>
            <person name="Lerch A."/>
            <person name="Gates K."/>
            <person name="Steiner S."/>
            <person name="Mohr C."/>
            <person name="Poehlmann R."/>
            <person name="Luedi P."/>
            <person name="Choi S."/>
            <person name="Wing R.A."/>
            <person name="Flavier A."/>
            <person name="Gaffney T.D."/>
            <person name="Philippsen P."/>
        </authorList>
    </citation>
    <scope>NUCLEOTIDE SEQUENCE [LARGE SCALE GENOMIC DNA]</scope>
    <source>
        <strain>ATCC 10895 / CBS 109.51 / FGSC 9923 / NRRL Y-1056</strain>
    </source>
</reference>
<reference key="2">
    <citation type="journal article" date="2013" name="G3 (Bethesda)">
        <title>Genomes of Ashbya fungi isolated from insects reveal four mating-type loci, numerous translocations, lack of transposons, and distinct gene duplications.</title>
        <authorList>
            <person name="Dietrich F.S."/>
            <person name="Voegeli S."/>
            <person name="Kuo S."/>
            <person name="Philippsen P."/>
        </authorList>
    </citation>
    <scope>GENOME REANNOTATION</scope>
    <source>
        <strain>ATCC 10895 / CBS 109.51 / FGSC 9923 / NRRL Y-1056</strain>
    </source>
</reference>
<feature type="transit peptide" description="Mitochondrion" evidence="2">
    <location>
        <begin position="1"/>
        <end position="14"/>
    </location>
</feature>
<feature type="chain" id="PRO_0000406643" description="MICOS complex subunit MIC60">
    <location>
        <begin position="15"/>
        <end position="496"/>
    </location>
</feature>
<feature type="topological domain" description="Mitochondrial matrix" evidence="2">
    <location>
        <begin position="15"/>
        <end position="35"/>
    </location>
</feature>
<feature type="transmembrane region" description="Helical" evidence="2">
    <location>
        <begin position="36"/>
        <end position="53"/>
    </location>
</feature>
<feature type="topological domain" description="Mitochondrial intermembrane" evidence="2">
    <location>
        <begin position="54"/>
        <end position="496"/>
    </location>
</feature>
<feature type="coiled-coil region" evidence="2">
    <location>
        <begin position="216"/>
        <end position="261"/>
    </location>
</feature>
<accession>Q754G4</accession>
<keyword id="KW-0175">Coiled coil</keyword>
<keyword id="KW-0472">Membrane</keyword>
<keyword id="KW-0496">Mitochondrion</keyword>
<keyword id="KW-0999">Mitochondrion inner membrane</keyword>
<keyword id="KW-1185">Reference proteome</keyword>
<keyword id="KW-0809">Transit peptide</keyword>
<keyword id="KW-0812">Transmembrane</keyword>
<keyword id="KW-1133">Transmembrane helix</keyword>
<comment type="function">
    <text evidence="1">Component of the MICOS complex, a large protein complex of the mitochondrial inner membrane that plays crucial roles in the maintenance of crista junctions, inner membrane architecture, and formation of contact sites to the outer membrane. Plays a role in keeping cristae membranes connected to the inner boundary membrane. Also promotes protein import via the mitochondrial intermembrane space assembly (MIA) pathway (By similarity).</text>
</comment>
<comment type="subunit">
    <text evidence="1">Component of the mitochondrial contact site and cristae organizing system (MICOS) complex.</text>
</comment>
<comment type="subcellular location">
    <subcellularLocation>
        <location evidence="1">Mitochondrion inner membrane</location>
        <topology evidence="1">Single-pass membrane protein</topology>
    </subcellularLocation>
</comment>
<comment type="similarity">
    <text evidence="3">Belongs to the MICOS complex subunit Mic60 family.</text>
</comment>
<evidence type="ECO:0000250" key="1"/>
<evidence type="ECO:0000255" key="2"/>
<evidence type="ECO:0000305" key="3"/>
<proteinExistence type="inferred from homology"/>
<protein>
    <recommendedName>
        <fullName>MICOS complex subunit MIC60</fullName>
    </recommendedName>
    <alternativeName>
        <fullName>Mitofilin</fullName>
    </alternativeName>
</protein>
<organism>
    <name type="scientific">Eremothecium gossypii (strain ATCC 10895 / CBS 109.51 / FGSC 9923 / NRRL Y-1056)</name>
    <name type="common">Yeast</name>
    <name type="synonym">Ashbya gossypii</name>
    <dbReference type="NCBI Taxonomy" id="284811"/>
    <lineage>
        <taxon>Eukaryota</taxon>
        <taxon>Fungi</taxon>
        <taxon>Dikarya</taxon>
        <taxon>Ascomycota</taxon>
        <taxon>Saccharomycotina</taxon>
        <taxon>Saccharomycetes</taxon>
        <taxon>Saccharomycetales</taxon>
        <taxon>Saccharomycetaceae</taxon>
        <taxon>Eremothecium</taxon>
    </lineage>
</organism>